<accession>Q80932</accession>
<sequence>MLRRRKRASPTDLYRSCLQGGDCIPDVQNKFEGNTIADWLLKIFGGLVYFGNLGIGTGRGTGGTFGYRPFGAPGSGRPTQELPIARPNVVIDPLGPAPIVPVDPSAASIVPLVEGAPDVGFAAPDAGPAAGGTDIELYTITNSTTDVGAVGGGPTVTSNEEFEVAVIDAQPIAPYPKQLLYDSTIAATFETQINPFINPDINNVNVLVDPSFAGDTVGDYFYEEIPLERLDIQTFDILEPPTESTPTQLGNRFVSRARDLYSRFVAQQPISEPDFLSQPSRLVQFEYRNPAFDPDVSLYFERDLEGLRAAPLQEFADVVYLGRPRVSSTSEGTIRVSRLGTRAALTTRSGLSVGPQVHFYMDLSDIPPEDSIELHTLNVTPQTSTIVDDILATTTFDDPANSLFTQFNEDVLTDDVEHNFTESHLVIPATDEENDTAINIINLRNIPLTVGMNSGDISTTLSDYNILDASLIVKSNVSEQPLFVLDYSDYDLHPGLLPKRRRIDYF</sequence>
<organismHost>
    <name type="scientific">Homo sapiens</name>
    <name type="common">Human</name>
    <dbReference type="NCBI Taxonomy" id="9606"/>
</organismHost>
<name>VL2_HPV50</name>
<feature type="chain" id="PRO_0000133616" description="Minor capsid protein L2">
    <location>
        <begin position="1"/>
        <end position="506"/>
    </location>
</feature>
<feature type="short sequence motif" description="Nuclear localization signal" evidence="1">
    <location>
        <begin position="1"/>
        <end position="8"/>
    </location>
</feature>
<feature type="short sequence motif" description="Nuclear localization signal" evidence="1">
    <location>
        <begin position="498"/>
        <end position="503"/>
    </location>
</feature>
<feature type="disulfide bond" evidence="1">
    <location>
        <begin position="17"/>
        <end position="23"/>
    </location>
</feature>
<proteinExistence type="inferred from homology"/>
<protein>
    <recommendedName>
        <fullName evidence="1">Minor capsid protein L2</fullName>
    </recommendedName>
</protein>
<comment type="function">
    <text evidence="1">Minor protein of the capsid that localizes along the inner surface of the virion, within the central cavities beneath the L1 pentamers. Plays a role in capsid stabilization through interaction with the major capsid protein L1. Once the virion enters the host cell, L2 escorts the genomic DNA into the nucleus by promoting escape from the endosomal compartments and traffic through the host Golgi network. Mechanistically, the C-terminus of L2 possesses a cell-penetrating peptide that protudes from the host endosome, interacts with host cytoplasmic retromer cargo and thereby mediates the capsid delivery to the host trans-Golgi network. Plays a role through its interaction with host dynein in the intracellular microtubule-dependent transport of viral capsid toward the nucleus. Mediates the viral genome import into the nucleus through binding to host importins. Once within the nucleus, L2 localizes viral genomes to host PML bodies in order to activate early gene expression for establishment of infection. Later on, promotes late gene expression by interacting with the viral E2 protein and by inhibiting its transcriptional activation functions. During virion assembly, encapsidates the genome by direct interaction with the viral DNA.</text>
</comment>
<comment type="subunit">
    <text evidence="1">Interacts with major capsid protein L1. Interacts with E2; this interaction inhibits E2 transcriptional activity but not the DNA replication function E2. Interacts with host GADD45GIP1. Interacts with host HSPA8; this interaction is required for L2 nuclear translocation. Interacts with host importins KPNB2 and KPNB3. Forms a complex with importin alpha2-beta1 heterodimers via interaction with the importin alpha2 adapter. Interacts with host DYNLT1; this interaction is essential for virus intracellular transport during entry. Interacts (via C-terminus) with host retromer subunits VPS35 and VPS29.</text>
</comment>
<comment type="subcellular location">
    <subcellularLocation>
        <location evidence="1">Virion</location>
    </subcellularLocation>
    <subcellularLocation>
        <location evidence="1">Host nucleus</location>
    </subcellularLocation>
    <subcellularLocation>
        <location evidence="1">Host early endosome</location>
    </subcellularLocation>
    <subcellularLocation>
        <location evidence="1">Host Golgi apparatus</location>
    </subcellularLocation>
</comment>
<comment type="PTM">
    <text evidence="1">Highly phosphorylated.</text>
</comment>
<comment type="similarity">
    <text evidence="1">Belongs to the papillomaviridae L2 protein family.</text>
</comment>
<evidence type="ECO:0000255" key="1">
    <source>
        <dbReference type="HAMAP-Rule" id="MF_04003"/>
    </source>
</evidence>
<organism>
    <name type="scientific">Human papillomavirus type 50</name>
    <dbReference type="NCBI Taxonomy" id="40539"/>
    <lineage>
        <taxon>Viruses</taxon>
        <taxon>Monodnaviria</taxon>
        <taxon>Shotokuvirae</taxon>
        <taxon>Cossaviricota</taxon>
        <taxon>Papovaviricetes</taxon>
        <taxon>Zurhausenvirales</taxon>
        <taxon>Papillomaviridae</taxon>
        <taxon>Firstpapillomavirinae</taxon>
        <taxon>Gammapapillomavirus</taxon>
        <taxon>Gammapapillomavirus 3</taxon>
    </lineage>
</organism>
<gene>
    <name evidence="1" type="primary">L2</name>
</gene>
<reference key="1">
    <citation type="submission" date="1995-07" db="EMBL/GenBank/DDBJ databases">
        <authorList>
            <person name="Delius H."/>
        </authorList>
    </citation>
    <scope>NUCLEOTIDE SEQUENCE [GENOMIC DNA]</scope>
</reference>
<keyword id="KW-0167">Capsid protein</keyword>
<keyword id="KW-1176">Cytoplasmic inwards viral transport</keyword>
<keyword id="KW-1015">Disulfide bond</keyword>
<keyword id="KW-0238">DNA-binding</keyword>
<keyword id="KW-1039">Host endosome</keyword>
<keyword id="KW-1040">Host Golgi apparatus</keyword>
<keyword id="KW-1048">Host nucleus</keyword>
<keyword id="KW-0945">Host-virus interaction</keyword>
<keyword id="KW-0426">Late protein</keyword>
<keyword id="KW-1177">Microtubular inwards viral transport</keyword>
<keyword id="KW-0597">Phosphoprotein</keyword>
<keyword id="KW-1185">Reference proteome</keyword>
<keyword id="KW-1163">Viral penetration into host nucleus</keyword>
<keyword id="KW-0946">Virion</keyword>
<keyword id="KW-1160">Virus entry into host cell</keyword>
<dbReference type="EMBL" id="U31790">
    <property type="protein sequence ID" value="AAA79476.1"/>
    <property type="molecule type" value="Genomic_DNA"/>
</dbReference>
<dbReference type="RefSeq" id="NP_043428.1">
    <property type="nucleotide sequence ID" value="NC_001691.1"/>
</dbReference>
<dbReference type="GeneID" id="1403634"/>
<dbReference type="KEGG" id="vg:1403634"/>
<dbReference type="OrthoDB" id="8047at10239"/>
<dbReference type="Proteomes" id="UP000168289">
    <property type="component" value="Genome"/>
</dbReference>
<dbReference type="GO" id="GO:0043657">
    <property type="term" value="C:host cell"/>
    <property type="evidence" value="ECO:0007669"/>
    <property type="project" value="GOC"/>
</dbReference>
<dbReference type="GO" id="GO:0044174">
    <property type="term" value="C:host cell endosome"/>
    <property type="evidence" value="ECO:0007669"/>
    <property type="project" value="UniProtKB-KW"/>
</dbReference>
<dbReference type="GO" id="GO:0044177">
    <property type="term" value="C:host cell Golgi apparatus"/>
    <property type="evidence" value="ECO:0007669"/>
    <property type="project" value="UniProtKB-SubCell"/>
</dbReference>
<dbReference type="GO" id="GO:0042025">
    <property type="term" value="C:host cell nucleus"/>
    <property type="evidence" value="ECO:0007669"/>
    <property type="project" value="UniProtKB-SubCell"/>
</dbReference>
<dbReference type="GO" id="GO:0019028">
    <property type="term" value="C:viral capsid"/>
    <property type="evidence" value="ECO:0007669"/>
    <property type="project" value="UniProtKB-UniRule"/>
</dbReference>
<dbReference type="GO" id="GO:0003677">
    <property type="term" value="F:DNA binding"/>
    <property type="evidence" value="ECO:0007669"/>
    <property type="project" value="UniProtKB-UniRule"/>
</dbReference>
<dbReference type="GO" id="GO:0005198">
    <property type="term" value="F:structural molecule activity"/>
    <property type="evidence" value="ECO:0007669"/>
    <property type="project" value="UniProtKB-UniRule"/>
</dbReference>
<dbReference type="GO" id="GO:0075521">
    <property type="term" value="P:microtubule-dependent intracellular transport of viral material towards nucleus"/>
    <property type="evidence" value="ECO:0007669"/>
    <property type="project" value="UniProtKB-UniRule"/>
</dbReference>
<dbReference type="GO" id="GO:0046718">
    <property type="term" value="P:symbiont entry into host cell"/>
    <property type="evidence" value="ECO:0007669"/>
    <property type="project" value="UniProtKB-KW"/>
</dbReference>
<dbReference type="GO" id="GO:0075732">
    <property type="term" value="P:viral penetration into host nucleus"/>
    <property type="evidence" value="ECO:0007669"/>
    <property type="project" value="UniProtKB-KW"/>
</dbReference>
<dbReference type="HAMAP" id="MF_04003">
    <property type="entry name" value="PPV_L2"/>
    <property type="match status" value="1"/>
</dbReference>
<dbReference type="InterPro" id="IPR000784">
    <property type="entry name" value="Late_L2"/>
</dbReference>
<dbReference type="Pfam" id="PF00513">
    <property type="entry name" value="Late_protein_L2"/>
    <property type="match status" value="1"/>
</dbReference>